<comment type="interaction">
    <interactant intactId="EBI-2866234">
        <id>Q92617</id>
    </interactant>
    <interactant intactId="EBI-25489038">
        <id>P59634</id>
        <label>6</label>
    </interactant>
    <organismsDiffer>true</organismsDiffer>
    <experiments>3</experiments>
</comment>
<comment type="interaction">
    <interactant intactId="EBI-12346419">
        <id>Q92617-2</id>
    </interactant>
    <interactant intactId="EBI-16439278">
        <id>Q6FHY5</id>
        <label>MEOX2</label>
    </interactant>
    <organismsDiffer>false</organismsDiffer>
    <experiments>3</experiments>
</comment>
<comment type="subcellular location">
    <subcellularLocation>
        <location evidence="6">Membrane</location>
        <topology evidence="6">Single-pass membrane protein</topology>
    </subcellularLocation>
</comment>
<comment type="alternative products">
    <event type="alternative splicing"/>
    <isoform>
        <id>Q92617-1</id>
        <name>1</name>
        <sequence type="displayed"/>
    </isoform>
    <isoform>
        <id>Q92617-2</id>
        <name>2</name>
        <sequence type="described" ref="VSP_021837"/>
    </isoform>
    <isoform>
        <id>Q92617-3</id>
        <name>3</name>
        <sequence type="described" ref="VSP_021833 VSP_021838"/>
    </isoform>
    <isoform>
        <id>Q92617-4</id>
        <name>4</name>
        <sequence type="described" ref="VSP_021832 VSP_021836"/>
    </isoform>
    <isoform>
        <id>Q92617-5</id>
        <name>5</name>
        <sequence type="described" ref="VSP_021834 VSP_021835 VSP_021839"/>
    </isoform>
    <isoform>
        <id>Q92617-6</id>
        <name>6</name>
        <sequence type="described" ref="VSP_033367"/>
    </isoform>
</comment>
<comment type="similarity">
    <text evidence="6">Belongs to the NPIP family.</text>
</comment>
<comment type="sequence caution" evidence="6">
    <conflict type="frameshift">
        <sequence resource="EMBL-CDS" id="BAA13210"/>
    </conflict>
</comment>
<comment type="sequence caution" evidence="6">
    <conflict type="erroneous initiation">
        <sequence resource="EMBL-CDS" id="BAD92869"/>
    </conflict>
</comment>
<gene>
    <name type="primary">NPIPB3</name>
    <name type="synonym">KIAA0220</name>
    <name type="synonym">NPIPL3</name>
</gene>
<name>NPIB3_HUMAN</name>
<accession>Q92617</accession>
<accession>O43332</accession>
<accession>Q504Q6</accession>
<accession>Q59F29</accession>
<accession>Q6GMR1</accession>
<accession>Q6P7T2</accession>
<accession>Q6PIE2</accession>
<accession>Q6RH21</accession>
<feature type="chain" id="PRO_0000050735" description="Nuclear pore complex-interacting protein family member B3">
    <location>
        <begin position="1"/>
        <end position="1050"/>
    </location>
</feature>
<feature type="transmembrane region" description="Helical" evidence="1">
    <location>
        <begin position="63"/>
        <end position="87"/>
    </location>
</feature>
<feature type="region of interest" description="Disordered" evidence="2">
    <location>
        <begin position="241"/>
        <end position="262"/>
    </location>
</feature>
<feature type="region of interest" description="Disordered" evidence="2">
    <location>
        <begin position="290"/>
        <end position="574"/>
    </location>
</feature>
<feature type="region of interest" description="Disordered" evidence="2">
    <location>
        <begin position="785"/>
        <end position="1050"/>
    </location>
</feature>
<feature type="compositionally biased region" description="Polar residues" evidence="2">
    <location>
        <begin position="252"/>
        <end position="262"/>
    </location>
</feature>
<feature type="compositionally biased region" description="Pro residues" evidence="2">
    <location>
        <begin position="349"/>
        <end position="359"/>
    </location>
</feature>
<feature type="compositionally biased region" description="Basic and acidic residues" evidence="2">
    <location>
        <begin position="406"/>
        <end position="416"/>
    </location>
</feature>
<feature type="compositionally biased region" description="Basic and acidic residues" evidence="2">
    <location>
        <begin position="448"/>
        <end position="458"/>
    </location>
</feature>
<feature type="compositionally biased region" description="Basic and acidic residues" evidence="2">
    <location>
        <begin position="490"/>
        <end position="500"/>
    </location>
</feature>
<feature type="compositionally biased region" description="Basic and acidic residues" evidence="2">
    <location>
        <begin position="528"/>
        <end position="538"/>
    </location>
</feature>
<feature type="compositionally biased region" description="Basic and acidic residues" evidence="2">
    <location>
        <begin position="820"/>
        <end position="830"/>
    </location>
</feature>
<feature type="compositionally biased region" description="Basic and acidic residues" evidence="2">
    <location>
        <begin position="862"/>
        <end position="872"/>
    </location>
</feature>
<feature type="compositionally biased region" description="Basic and acidic residues" evidence="2">
    <location>
        <begin position="904"/>
        <end position="914"/>
    </location>
</feature>
<feature type="splice variant" id="VSP_021832" description="In isoform 4." evidence="3">
    <location>
        <begin position="1"/>
        <end position="216"/>
    </location>
</feature>
<feature type="splice variant" id="VSP_021833" description="In isoform 3." evidence="3">
    <original>MVKLSIVLTPQFLSHDQGQLTKELQQHVKSVTCPCEYLRK</original>
    <variation>MFCCLGYEWLSGGCKTWHSAW</variation>
    <location>
        <begin position="1"/>
        <end position="40"/>
    </location>
</feature>
<feature type="splice variant" id="VSP_021834" description="In isoform 5." evidence="4">
    <location>
        <begin position="290"/>
        <end position="327"/>
    </location>
</feature>
<feature type="splice variant" id="VSP_021835" description="In isoform 5." evidence="4">
    <location>
        <begin position="413"/>
        <end position="576"/>
    </location>
</feature>
<feature type="splice variant" id="VSP_021836" description="In isoform 4." evidence="3">
    <location>
        <begin position="515"/>
        <end position="928"/>
    </location>
</feature>
<feature type="splice variant" id="VSP_021837" description="In isoform 2." evidence="3">
    <location>
        <begin position="515"/>
        <end position="886"/>
    </location>
</feature>
<feature type="splice variant" id="VSP_021838" description="In isoform 3." evidence="3">
    <location>
        <begin position="577"/>
        <end position="868"/>
    </location>
</feature>
<feature type="splice variant" id="VSP_021839" description="In isoform 5." evidence="4">
    <original>ERLRGPLPPSADDNLKTPSERQLTPLPPSAPPSADDNIKTPA</original>
    <variation>GRFHPQRMIISRHLPSVSSLPFHPQLHPQQMIISRHLPSVCG</variation>
    <location>
        <begin position="785"/>
        <end position="826"/>
    </location>
</feature>
<feature type="splice variant" id="VSP_033367" description="In isoform 6." evidence="5">
    <location>
        <begin position="947"/>
        <end position="974"/>
    </location>
</feature>
<feature type="sequence conflict" description="In Ref. 4; AAH36263." evidence="6" ref="4">
    <original>T</original>
    <variation>S</variation>
    <location>
        <position position="21"/>
    </location>
</feature>
<feature type="sequence conflict" description="In Ref. 4; AAH36263." evidence="6" ref="4">
    <original>G</original>
    <variation>V</variation>
    <location>
        <position position="138"/>
    </location>
</feature>
<feature type="sequence conflict" description="In Ref. 4; AAH36263." evidence="6" ref="4">
    <original>P</original>
    <variation>L</variation>
    <location>
        <position position="388"/>
    </location>
</feature>
<feature type="sequence conflict" description="In Ref. 1; BAA13210." evidence="6" ref="1">
    <original>A</original>
    <variation>P</variation>
    <location>
        <position position="521"/>
    </location>
</feature>
<feature type="sequence conflict" description="In Ref. 1; BAA13210." evidence="6" ref="1">
    <original>A</original>
    <variation>APPSA</variation>
    <location>
        <position position="526"/>
    </location>
</feature>
<feature type="sequence conflict" description="In Ref. 2; BAD92869." evidence="6" ref="2">
    <location>
        <position position="584"/>
    </location>
</feature>
<feature type="sequence conflict" description="In Ref. 1; BAA13210." evidence="6" ref="1">
    <original>HLP</original>
    <variation>YLL</variation>
    <location>
        <begin position="610"/>
        <end position="612"/>
    </location>
</feature>
<feature type="sequence conflict" description="In Ref. 1; BAA13210." evidence="6" ref="1">
    <original>G</original>
    <variation>F</variation>
    <location>
        <position position="617"/>
    </location>
</feature>
<feature type="sequence conflict" description="In Ref. 1; BAA13210." evidence="6" ref="1">
    <original>PQQ</original>
    <variation>HQP</variation>
    <location>
        <begin position="621"/>
        <end position="623"/>
    </location>
</feature>
<feature type="sequence conflict" description="In Ref. 2; BAD92869." evidence="6" ref="2">
    <original>QQ</original>
    <variation>ER</variation>
    <location>
        <begin position="622"/>
        <end position="623"/>
    </location>
</feature>
<feature type="sequence conflict" description="In Ref. 2; BAD92869." evidence="6" ref="2">
    <original>Q</original>
    <variation>E</variation>
    <location>
        <position position="664"/>
    </location>
</feature>
<feature type="sequence conflict" description="In Ref. 1; BAA13210." evidence="6" ref="1">
    <original>V</original>
    <variation>I</variation>
    <location>
        <position position="675"/>
    </location>
</feature>
<feature type="sequence conflict" description="In Ref. 1; BAA13210 and 2; BAD92869." evidence="6" ref="1 2">
    <original>Q</original>
    <variation>R</variation>
    <location>
        <position position="707"/>
    </location>
</feature>
<feature type="sequence conflict" description="In Ref. 1; BAA13210." evidence="6" ref="1">
    <original>P</original>
    <variation>T</variation>
    <location>
        <position position="766"/>
    </location>
</feature>
<feature type="sequence conflict" description="In Ref. 4; AAH73943." evidence="6" ref="4">
    <original>P</original>
    <variation>S</variation>
    <location>
        <position position="825"/>
    </location>
</feature>
<keyword id="KW-0025">Alternative splicing</keyword>
<keyword id="KW-0472">Membrane</keyword>
<keyword id="KW-1185">Reference proteome</keyword>
<keyword id="KW-0812">Transmembrane</keyword>
<keyword id="KW-1133">Transmembrane helix</keyword>
<protein>
    <recommendedName>
        <fullName>Nuclear pore complex-interacting protein family member B3</fullName>
    </recommendedName>
    <alternativeName>
        <fullName>Nuclear pore complex-interacting protein-like 3</fullName>
    </alternativeName>
    <alternativeName>
        <fullName>Protein pps22-1</fullName>
    </alternativeName>
</protein>
<sequence length="1050" mass="116847">MVKLSIVLTPQFLSHDQGQLTKELQQHVKSVTCPCEYLRKVINTLADHHHRGTDFGGSPWLHVIIAFPTSYKVVITLWIVYLWVSLLKTIFWSRNGHDGSTDVQQRAWRSNRRRQEGLRSICMHTKKRVSSFRGNKIGLKDVITLRRHVETKVRAKIRKRKVTTKINHHDKINGKRKTARKQKMFQRAQELRRRAEDYHKCKIPPSARKALCNWVRMAAAEHRHSSGLPYWPYLTAETLKNRMGHQPPPPTQQHSITDNSLSLKTPPECLLTPLPPSADDNLKTPPECVLTPLPPSADDNLKTPPECVLTPLPPSADDNLKTPPECLLTPLPPSADDNLKTPPECLLTPLPPSALPSAPPSADDNLKTRAECLLHPLPPSADDNLKTPSERQLTPLPPSAPPSADDNIKTPAERLRGPLPPSADDNLKTPSERQLTPLPPSAPPSADDNIKTPAERLRGPLPPSADDNLKTPSERQLTPLPPSAPPSADDNIKTPAERLRGPLPPSADDNLKTPSERQLTALPPSADDNIKTPAERLRGPLPPSADDNLKTPSERQLTPLPPSAPPSADDNIKTPAFHPQRMIISRHLPSVSSLPFHPQLHPQQMIISRHLPSVCGGRFHPQQMIISRHLPSVSSLPFHPQLHPQQMIISRHLPSVCGGRFHPQRMIISRHLPSVSSLPFHPQLHPQQMIISRHLPSVCGGRFHPQQMIISRHLPSVSSLPFHPQLHPQQMIISRHLPSVCGGRFHPQRMIISRHLPSVSSLPFHPQLHPQQMIISRHLPSVCGERLRGPLPPSADDNLKTPSERQLTPLPPSAPPSADDNIKTPAERLRGPLPPSADDNLKTPSERQLTPLPPSAPPSADDNIKTPAERLRGPLPPSADDNLKTPSERQLTPLPPSAPPSADDNIKTPAERLRGPLPPSADDNLKTPPLATQEAEAEKPRKPKRQRAAEMEPPPEPKRRRVGDVEPSRKPKRRRAADVEPSSPEPKRRRVGDVEPSRKPKRRRAADVEPSSPEPKRRRVGDVEPSRKPKRRRAADVEPSLPEPKRRRLS</sequence>
<proteinExistence type="evidence at protein level"/>
<reference key="1">
    <citation type="journal article" date="1996" name="DNA Res.">
        <title>Prediction of the coding sequences of unidentified human genes. VI. The coding sequences of 80 new genes (KIAA0201-KIAA0280) deduced by analysis of cDNA clones from cell line KG-1 and brain.</title>
        <authorList>
            <person name="Nagase T."/>
            <person name="Seki N."/>
            <person name="Ishikawa K."/>
            <person name="Ohira M."/>
            <person name="Kawarabayasi Y."/>
            <person name="Ohara O."/>
            <person name="Tanaka A."/>
            <person name="Kotani H."/>
            <person name="Miyajima N."/>
            <person name="Nomura N."/>
        </authorList>
    </citation>
    <scope>NUCLEOTIDE SEQUENCE [LARGE SCALE MRNA] (ISOFORM 1)</scope>
    <source>
        <tissue>Bone marrow</tissue>
    </source>
</reference>
<reference key="2">
    <citation type="submission" date="2005-03" db="EMBL/GenBank/DDBJ databases">
        <authorList>
            <person name="Totoki Y."/>
            <person name="Toyoda A."/>
            <person name="Takeda T."/>
            <person name="Sakaki Y."/>
            <person name="Tanaka A."/>
            <person name="Yokoyama S."/>
            <person name="Ohara O."/>
            <person name="Nagase T."/>
            <person name="Kikuno R.F."/>
        </authorList>
    </citation>
    <scope>NUCLEOTIDE SEQUENCE [LARGE SCALE MRNA] (ISOFORM 5)</scope>
    <source>
        <tissue>Spleen</tissue>
    </source>
</reference>
<reference key="3">
    <citation type="journal article" date="2004" name="Nature">
        <title>The sequence and analysis of duplication-rich human chromosome 16.</title>
        <authorList>
            <person name="Martin J."/>
            <person name="Han C."/>
            <person name="Gordon L.A."/>
            <person name="Terry A."/>
            <person name="Prabhakar S."/>
            <person name="She X."/>
            <person name="Xie G."/>
            <person name="Hellsten U."/>
            <person name="Chan Y.M."/>
            <person name="Altherr M."/>
            <person name="Couronne O."/>
            <person name="Aerts A."/>
            <person name="Bajorek E."/>
            <person name="Black S."/>
            <person name="Blumer H."/>
            <person name="Branscomb E."/>
            <person name="Brown N.C."/>
            <person name="Bruno W.J."/>
            <person name="Buckingham J.M."/>
            <person name="Callen D.F."/>
            <person name="Campbell C.S."/>
            <person name="Campbell M.L."/>
            <person name="Campbell E.W."/>
            <person name="Caoile C."/>
            <person name="Challacombe J.F."/>
            <person name="Chasteen L.A."/>
            <person name="Chertkov O."/>
            <person name="Chi H.C."/>
            <person name="Christensen M."/>
            <person name="Clark L.M."/>
            <person name="Cohn J.D."/>
            <person name="Denys M."/>
            <person name="Detter J.C."/>
            <person name="Dickson M."/>
            <person name="Dimitrijevic-Bussod M."/>
            <person name="Escobar J."/>
            <person name="Fawcett J.J."/>
            <person name="Flowers D."/>
            <person name="Fotopulos D."/>
            <person name="Glavina T."/>
            <person name="Gomez M."/>
            <person name="Gonzales E."/>
            <person name="Goodstein D."/>
            <person name="Goodwin L.A."/>
            <person name="Grady D.L."/>
            <person name="Grigoriev I."/>
            <person name="Groza M."/>
            <person name="Hammon N."/>
            <person name="Hawkins T."/>
            <person name="Haydu L."/>
            <person name="Hildebrand C.E."/>
            <person name="Huang W."/>
            <person name="Israni S."/>
            <person name="Jett J."/>
            <person name="Jewett P.B."/>
            <person name="Kadner K."/>
            <person name="Kimball H."/>
            <person name="Kobayashi A."/>
            <person name="Krawczyk M.-C."/>
            <person name="Leyba T."/>
            <person name="Longmire J.L."/>
            <person name="Lopez F."/>
            <person name="Lou Y."/>
            <person name="Lowry S."/>
            <person name="Ludeman T."/>
            <person name="Manohar C.F."/>
            <person name="Mark G.A."/>
            <person name="McMurray K.L."/>
            <person name="Meincke L.J."/>
            <person name="Morgan J."/>
            <person name="Moyzis R.K."/>
            <person name="Mundt M.O."/>
            <person name="Munk A.C."/>
            <person name="Nandkeshwar R.D."/>
            <person name="Pitluck S."/>
            <person name="Pollard M."/>
            <person name="Predki P."/>
            <person name="Parson-Quintana B."/>
            <person name="Ramirez L."/>
            <person name="Rash S."/>
            <person name="Retterer J."/>
            <person name="Ricke D.O."/>
            <person name="Robinson D.L."/>
            <person name="Rodriguez A."/>
            <person name="Salamov A."/>
            <person name="Saunders E.H."/>
            <person name="Scott D."/>
            <person name="Shough T."/>
            <person name="Stallings R.L."/>
            <person name="Stalvey M."/>
            <person name="Sutherland R.D."/>
            <person name="Tapia R."/>
            <person name="Tesmer J.G."/>
            <person name="Thayer N."/>
            <person name="Thompson L.S."/>
            <person name="Tice H."/>
            <person name="Torney D.C."/>
            <person name="Tran-Gyamfi M."/>
            <person name="Tsai M."/>
            <person name="Ulanovsky L.E."/>
            <person name="Ustaszewska A."/>
            <person name="Vo N."/>
            <person name="White P.S."/>
            <person name="Williams A.L."/>
            <person name="Wills P.L."/>
            <person name="Wu J.-R."/>
            <person name="Wu K."/>
            <person name="Yang J."/>
            <person name="DeJong P."/>
            <person name="Bruce D."/>
            <person name="Doggett N.A."/>
            <person name="Deaven L."/>
            <person name="Schmutz J."/>
            <person name="Grimwood J."/>
            <person name="Richardson P."/>
            <person name="Rokhsar D.S."/>
            <person name="Eichler E.E."/>
            <person name="Gilna P."/>
            <person name="Lucas S.M."/>
            <person name="Myers R.M."/>
            <person name="Rubin E.M."/>
            <person name="Pennacchio L.A."/>
        </authorList>
    </citation>
    <scope>NUCLEOTIDE SEQUENCE [LARGE SCALE GENOMIC DNA]</scope>
</reference>
<reference key="4">
    <citation type="journal article" date="2004" name="Genome Res.">
        <title>The status, quality, and expansion of the NIH full-length cDNA project: the Mammalian Gene Collection (MGC).</title>
        <authorList>
            <consortium name="The MGC Project Team"/>
        </authorList>
    </citation>
    <scope>NUCLEOTIDE SEQUENCE [LARGE SCALE MRNA] (ISOFORMS 2; 3 AND 4)</scope>
    <scope>NUCLEOTIDE SEQUENCE [LARGE SCALE MRNA] OF 690-1050 (ISOFORM 1)</scope>
    <source>
        <tissue>Lymph</tissue>
        <tissue>Mammary carcinoma</tissue>
        <tissue>Pancreas</tissue>
        <tissue>PNS</tissue>
    </source>
</reference>
<reference key="5">
    <citation type="submission" date="2003-12" db="EMBL/GenBank/DDBJ databases">
        <title>Cloning and identification of a new protein coding gene pps22-1 binding with promoter DNA of pre-pre-S gene of hepatitis B virus.</title>
        <authorList>
            <person name="Huang Y.-P."/>
            <person name="Cheng J."/>
            <person name="Yang Y.-J."/>
        </authorList>
    </citation>
    <scope>NUCLEOTIDE SEQUENCE [MRNA] OF 917-1050 (ISOFORM 6)</scope>
</reference>
<evidence type="ECO:0000255" key="1"/>
<evidence type="ECO:0000256" key="2">
    <source>
        <dbReference type="SAM" id="MobiDB-lite"/>
    </source>
</evidence>
<evidence type="ECO:0000303" key="3">
    <source>
    </source>
</evidence>
<evidence type="ECO:0000303" key="4">
    <source ref="2"/>
</evidence>
<evidence type="ECO:0000303" key="5">
    <source ref="5"/>
</evidence>
<evidence type="ECO:0000305" key="6"/>
<organism>
    <name type="scientific">Homo sapiens</name>
    <name type="common">Human</name>
    <dbReference type="NCBI Taxonomy" id="9606"/>
    <lineage>
        <taxon>Eukaryota</taxon>
        <taxon>Metazoa</taxon>
        <taxon>Chordata</taxon>
        <taxon>Craniata</taxon>
        <taxon>Vertebrata</taxon>
        <taxon>Euteleostomi</taxon>
        <taxon>Mammalia</taxon>
        <taxon>Eutheria</taxon>
        <taxon>Euarchontoglires</taxon>
        <taxon>Primates</taxon>
        <taxon>Haplorrhini</taxon>
        <taxon>Catarrhini</taxon>
        <taxon>Hominidae</taxon>
        <taxon>Homo</taxon>
    </lineage>
</organism>
<dbReference type="EMBL" id="D86974">
    <property type="protein sequence ID" value="BAA13210.2"/>
    <property type="status" value="ALT_SEQ"/>
    <property type="molecule type" value="mRNA"/>
</dbReference>
<dbReference type="EMBL" id="AB209632">
    <property type="protein sequence ID" value="BAD92869.1"/>
    <property type="status" value="ALT_INIT"/>
    <property type="molecule type" value="Transcribed_RNA"/>
</dbReference>
<dbReference type="EMBL" id="AC008740">
    <property type="status" value="NOT_ANNOTATED_CDS"/>
    <property type="molecule type" value="Genomic_DNA"/>
</dbReference>
<dbReference type="EMBL" id="BC036263">
    <property type="protein sequence ID" value="AAH36263.1"/>
    <property type="molecule type" value="mRNA"/>
</dbReference>
<dbReference type="EMBL" id="BC061522">
    <property type="protein sequence ID" value="AAH61522.1"/>
    <property type="molecule type" value="mRNA"/>
</dbReference>
<dbReference type="EMBL" id="BC073943">
    <property type="protein sequence ID" value="AAH73943.1"/>
    <property type="molecule type" value="mRNA"/>
</dbReference>
<dbReference type="EMBL" id="BC094882">
    <property type="protein sequence ID" value="AAH94882.1"/>
    <property type="molecule type" value="mRNA"/>
</dbReference>
<dbReference type="EMBL" id="AY498718">
    <property type="protein sequence ID" value="AAS48701.1"/>
    <property type="molecule type" value="mRNA"/>
</dbReference>
<dbReference type="BioGRID" id="116739">
    <property type="interactions" value="5"/>
</dbReference>
<dbReference type="FunCoup" id="Q92617">
    <property type="interactions" value="9"/>
</dbReference>
<dbReference type="IntAct" id="Q92617">
    <property type="interactions" value="4"/>
</dbReference>
<dbReference type="GlyGen" id="Q92617">
    <property type="glycosylation" value="1 site"/>
</dbReference>
<dbReference type="iPTMnet" id="Q92617"/>
<dbReference type="PhosphoSitePlus" id="Q92617"/>
<dbReference type="BioMuta" id="NPIPB3"/>
<dbReference type="DMDM" id="215274263"/>
<dbReference type="jPOST" id="Q92617"/>
<dbReference type="MassIVE" id="Q92617"/>
<dbReference type="PeptideAtlas" id="Q92617"/>
<dbReference type="ProteomicsDB" id="75370">
    <molecule id="Q92617-6"/>
</dbReference>
<dbReference type="Antibodypedia" id="67318">
    <property type="antibodies" value="4 antibodies from 4 providers"/>
</dbReference>
<dbReference type="Ensembl" id="ENST00000542817.1">
    <molecule id="Q92617-4"/>
    <property type="protein sequence ID" value="ENSP00000444096.1"/>
    <property type="gene ID" value="ENSG00000169246.17"/>
</dbReference>
<dbReference type="UCSC" id="uc059rux.1">
    <molecule id="Q92617-1"/>
    <property type="organism name" value="human"/>
</dbReference>
<dbReference type="AGR" id="HGNC:28989"/>
<dbReference type="GeneCards" id="NPIPB3"/>
<dbReference type="HGNC" id="HGNC:28989">
    <property type="gene designation" value="NPIPB3"/>
</dbReference>
<dbReference type="HPA" id="ENSG00000169246">
    <property type="expression patterns" value="Low tissue specificity"/>
</dbReference>
<dbReference type="neXtProt" id="NX_Q92617"/>
<dbReference type="OpenTargets" id="ENSG00000169246"/>
<dbReference type="PharmGKB" id="PA164724182"/>
<dbReference type="VEuPathDB" id="HostDB:ENSG00000169246"/>
<dbReference type="GeneTree" id="ENSGT00540000072033"/>
<dbReference type="HOGENOM" id="CLU_780666_0_0_1"/>
<dbReference type="InParanoid" id="Q92617"/>
<dbReference type="OMA" id="YCPASHR"/>
<dbReference type="OrthoDB" id="9541845at2759"/>
<dbReference type="PAN-GO" id="Q92617">
    <property type="GO annotations" value="1 GO annotation based on evolutionary models"/>
</dbReference>
<dbReference type="PhylomeDB" id="Q92617"/>
<dbReference type="PathwayCommons" id="Q92617"/>
<dbReference type="Reactome" id="R-HSA-9692916">
    <property type="pathway name" value="SARS-CoV-1 activates/modulates innate immune responses"/>
</dbReference>
<dbReference type="SignaLink" id="Q92617"/>
<dbReference type="BioGRID-ORCS" id="23117">
    <property type="hits" value="32 hits in 234 CRISPR screens"/>
</dbReference>
<dbReference type="ChiTaRS" id="NPIPB3">
    <property type="organism name" value="human"/>
</dbReference>
<dbReference type="GenomeRNAi" id="23117"/>
<dbReference type="Pharos" id="Q92617">
    <property type="development level" value="Tdark"/>
</dbReference>
<dbReference type="PRO" id="PR:Q92617"/>
<dbReference type="Proteomes" id="UP000005640">
    <property type="component" value="Chromosome 16"/>
</dbReference>
<dbReference type="RNAct" id="Q92617">
    <property type="molecule type" value="protein"/>
</dbReference>
<dbReference type="Bgee" id="ENSG00000169246">
    <property type="expression patterns" value="Expressed in right uterine tube and 96 other cell types or tissues"/>
</dbReference>
<dbReference type="ExpressionAtlas" id="Q92617">
    <property type="expression patterns" value="baseline and differential"/>
</dbReference>
<dbReference type="GO" id="GO:0016020">
    <property type="term" value="C:membrane"/>
    <property type="evidence" value="ECO:0007669"/>
    <property type="project" value="UniProtKB-SubCell"/>
</dbReference>
<dbReference type="GO" id="GO:0005635">
    <property type="term" value="C:nuclear envelope"/>
    <property type="evidence" value="ECO:0000304"/>
    <property type="project" value="Reactome"/>
</dbReference>
<dbReference type="InterPro" id="IPR048893">
    <property type="entry name" value="NPB13-like_MII_rpt"/>
</dbReference>
<dbReference type="InterPro" id="IPR009443">
    <property type="entry name" value="NPIP"/>
</dbReference>
<dbReference type="InterPro" id="IPR054697">
    <property type="entry name" value="NPIP_N"/>
</dbReference>
<dbReference type="PANTHER" id="PTHR15438">
    <property type="entry name" value="NUCLEAR PORE COMPLEX INTERACTING PROTEIN"/>
    <property type="match status" value="1"/>
</dbReference>
<dbReference type="PANTHER" id="PTHR15438:SF5">
    <property type="entry name" value="NUCLEAR PORE COMPLEX-INTERACTING PROTEIN FAMILY MEMBER A2-RELATED"/>
    <property type="match status" value="1"/>
</dbReference>
<dbReference type="Pfam" id="PF20885">
    <property type="entry name" value="NPB13-l_MII_rpt"/>
    <property type="match status" value="2"/>
</dbReference>
<dbReference type="Pfam" id="PF06409">
    <property type="entry name" value="NPIP"/>
    <property type="match status" value="1"/>
</dbReference>